<dbReference type="EC" id="2.7.11.1"/>
<dbReference type="EMBL" id="X80329">
    <property type="protein sequence ID" value="CAA56578.1"/>
    <property type="molecule type" value="Genomic_DNA"/>
</dbReference>
<dbReference type="EMBL" id="U10556">
    <property type="protein sequence ID" value="AAB68896.1"/>
    <property type="molecule type" value="Genomic_DNA"/>
</dbReference>
<dbReference type="EMBL" id="BK006934">
    <property type="protein sequence ID" value="DAA06777.1"/>
    <property type="molecule type" value="Genomic_DNA"/>
</dbReference>
<dbReference type="PIR" id="S64731">
    <property type="entry name" value="S64731"/>
</dbReference>
<dbReference type="RefSeq" id="NP_011950.1">
    <property type="nucleotide sequence ID" value="NM_001179212.1"/>
</dbReference>
<dbReference type="BioGRID" id="36517">
    <property type="interactions" value="513"/>
</dbReference>
<dbReference type="DIP" id="DIP-2972N"/>
<dbReference type="FunCoup" id="P38691">
    <property type="interactions" value="749"/>
</dbReference>
<dbReference type="IntAct" id="P38691">
    <property type="interactions" value="70"/>
</dbReference>
<dbReference type="MINT" id="P38691"/>
<dbReference type="STRING" id="4932.YHR082C"/>
<dbReference type="GlyGen" id="P38691">
    <property type="glycosylation" value="1 site, 1 O-linked glycan (1 site)"/>
</dbReference>
<dbReference type="iPTMnet" id="P38691"/>
<dbReference type="PaxDb" id="4932-YHR082C"/>
<dbReference type="PeptideAtlas" id="P38691"/>
<dbReference type="EnsemblFungi" id="YHR082C_mRNA">
    <property type="protein sequence ID" value="YHR082C"/>
    <property type="gene ID" value="YHR082C"/>
</dbReference>
<dbReference type="GeneID" id="856482"/>
<dbReference type="KEGG" id="sce:YHR082C"/>
<dbReference type="AGR" id="SGD:S000001124"/>
<dbReference type="SGD" id="S000001124">
    <property type="gene designation" value="KSP1"/>
</dbReference>
<dbReference type="VEuPathDB" id="FungiDB:YHR082C"/>
<dbReference type="eggNOG" id="KOG0583">
    <property type="taxonomic scope" value="Eukaryota"/>
</dbReference>
<dbReference type="HOGENOM" id="CLU_008377_0_0_1"/>
<dbReference type="InParanoid" id="P38691"/>
<dbReference type="OMA" id="KSFCYFA"/>
<dbReference type="OrthoDB" id="4062651at2759"/>
<dbReference type="BioCyc" id="YEAST:G3O-31129-MONOMER"/>
<dbReference type="BRENDA" id="2.7.11.1">
    <property type="organism ID" value="984"/>
</dbReference>
<dbReference type="Reactome" id="R-SCE-176187">
    <property type="pathway name" value="Activation of ATR in response to replication stress"/>
</dbReference>
<dbReference type="Reactome" id="R-SCE-5693616">
    <property type="pathway name" value="Presynaptic phase of homologous DNA pairing and strand exchange"/>
</dbReference>
<dbReference type="Reactome" id="R-SCE-69601">
    <property type="pathway name" value="Ubiquitin Mediated Degradation of Phosphorylated Cdc25A"/>
</dbReference>
<dbReference type="BioGRID-ORCS" id="856482">
    <property type="hits" value="0 hits in 13 CRISPR screens"/>
</dbReference>
<dbReference type="CD-CODE" id="E03F929F">
    <property type="entry name" value="Stress granule"/>
</dbReference>
<dbReference type="PRO" id="PR:P38691"/>
<dbReference type="Proteomes" id="UP000002311">
    <property type="component" value="Chromosome VIII"/>
</dbReference>
<dbReference type="RNAct" id="P38691">
    <property type="molecule type" value="protein"/>
</dbReference>
<dbReference type="GO" id="GO:0005737">
    <property type="term" value="C:cytoplasm"/>
    <property type="evidence" value="ECO:0000314"/>
    <property type="project" value="SGD"/>
</dbReference>
<dbReference type="GO" id="GO:0010494">
    <property type="term" value="C:cytoplasmic stress granule"/>
    <property type="evidence" value="ECO:0000314"/>
    <property type="project" value="SGD"/>
</dbReference>
<dbReference type="GO" id="GO:0005634">
    <property type="term" value="C:nucleus"/>
    <property type="evidence" value="ECO:0000314"/>
    <property type="project" value="SGD"/>
</dbReference>
<dbReference type="GO" id="GO:0005524">
    <property type="term" value="F:ATP binding"/>
    <property type="evidence" value="ECO:0007669"/>
    <property type="project" value="UniProtKB-KW"/>
</dbReference>
<dbReference type="GO" id="GO:0003729">
    <property type="term" value="F:mRNA binding"/>
    <property type="evidence" value="ECO:0007005"/>
    <property type="project" value="SGD"/>
</dbReference>
<dbReference type="GO" id="GO:0004672">
    <property type="term" value="F:protein kinase activity"/>
    <property type="evidence" value="ECO:0007005"/>
    <property type="project" value="SGD"/>
</dbReference>
<dbReference type="GO" id="GO:0106310">
    <property type="term" value="F:protein serine kinase activity"/>
    <property type="evidence" value="ECO:0007669"/>
    <property type="project" value="RHEA"/>
</dbReference>
<dbReference type="GO" id="GO:0004674">
    <property type="term" value="F:protein serine/threonine kinase activity"/>
    <property type="evidence" value="ECO:0000318"/>
    <property type="project" value="GO_Central"/>
</dbReference>
<dbReference type="GO" id="GO:0000086">
    <property type="term" value="P:G2/M transition of mitotic cell cycle"/>
    <property type="evidence" value="ECO:0000318"/>
    <property type="project" value="GO_Central"/>
</dbReference>
<dbReference type="GO" id="GO:0016242">
    <property type="term" value="P:negative regulation of macroautophagy"/>
    <property type="evidence" value="ECO:0000315"/>
    <property type="project" value="SGD"/>
</dbReference>
<dbReference type="GO" id="GO:0008104">
    <property type="term" value="P:protein localization"/>
    <property type="evidence" value="ECO:0000315"/>
    <property type="project" value="SGD"/>
</dbReference>
<dbReference type="GO" id="GO:0010570">
    <property type="term" value="P:regulation of filamentous growth"/>
    <property type="evidence" value="ECO:0000315"/>
    <property type="project" value="SGD"/>
</dbReference>
<dbReference type="GO" id="GO:2000220">
    <property type="term" value="P:regulation of pseudohyphal growth"/>
    <property type="evidence" value="ECO:0000315"/>
    <property type="project" value="SGD"/>
</dbReference>
<dbReference type="GO" id="GO:0043555">
    <property type="term" value="P:regulation of translation in response to stress"/>
    <property type="evidence" value="ECO:0000315"/>
    <property type="project" value="SGD"/>
</dbReference>
<dbReference type="GO" id="GO:0031929">
    <property type="term" value="P:TOR signaling"/>
    <property type="evidence" value="ECO:0000315"/>
    <property type="project" value="SGD"/>
</dbReference>
<dbReference type="CDD" id="cd13993">
    <property type="entry name" value="STKc_Pat1_like"/>
    <property type="match status" value="1"/>
</dbReference>
<dbReference type="FunFam" id="3.30.200.20:FF:000816">
    <property type="entry name" value="Ksp1p"/>
    <property type="match status" value="1"/>
</dbReference>
<dbReference type="FunFam" id="1.10.510.10:FF:000942">
    <property type="entry name" value="Serine/threonine-protein kinase KSP1"/>
    <property type="match status" value="1"/>
</dbReference>
<dbReference type="Gene3D" id="3.30.200.20">
    <property type="entry name" value="Phosphorylase Kinase, domain 1"/>
    <property type="match status" value="1"/>
</dbReference>
<dbReference type="Gene3D" id="1.10.510.10">
    <property type="entry name" value="Transferase(Phosphotransferase) domain 1"/>
    <property type="match status" value="1"/>
</dbReference>
<dbReference type="InterPro" id="IPR045269">
    <property type="entry name" value="Atg1-like"/>
</dbReference>
<dbReference type="InterPro" id="IPR011009">
    <property type="entry name" value="Kinase-like_dom_sf"/>
</dbReference>
<dbReference type="InterPro" id="IPR000719">
    <property type="entry name" value="Prot_kinase_dom"/>
</dbReference>
<dbReference type="InterPro" id="IPR008271">
    <property type="entry name" value="Ser/Thr_kinase_AS"/>
</dbReference>
<dbReference type="PANTHER" id="PTHR24348:SF22">
    <property type="entry name" value="NON-SPECIFIC SERINE_THREONINE PROTEIN KINASE"/>
    <property type="match status" value="1"/>
</dbReference>
<dbReference type="PANTHER" id="PTHR24348">
    <property type="entry name" value="SERINE/THREONINE-PROTEIN KINASE UNC-51-RELATED"/>
    <property type="match status" value="1"/>
</dbReference>
<dbReference type="Pfam" id="PF00069">
    <property type="entry name" value="Pkinase"/>
    <property type="match status" value="1"/>
</dbReference>
<dbReference type="SMART" id="SM00220">
    <property type="entry name" value="S_TKc"/>
    <property type="match status" value="1"/>
</dbReference>
<dbReference type="SUPFAM" id="SSF56112">
    <property type="entry name" value="Protein kinase-like (PK-like)"/>
    <property type="match status" value="1"/>
</dbReference>
<dbReference type="PROSITE" id="PS50011">
    <property type="entry name" value="PROTEIN_KINASE_DOM"/>
    <property type="match status" value="1"/>
</dbReference>
<dbReference type="PROSITE" id="PS00108">
    <property type="entry name" value="PROTEIN_KINASE_ST"/>
    <property type="match status" value="1"/>
</dbReference>
<protein>
    <recommendedName>
        <fullName>Serine/threonine-protein kinase KSP1</fullName>
        <ecNumber>2.7.11.1</ecNumber>
    </recommendedName>
</protein>
<organism>
    <name type="scientific">Saccharomyces cerevisiae (strain ATCC 204508 / S288c)</name>
    <name type="common">Baker's yeast</name>
    <dbReference type="NCBI Taxonomy" id="559292"/>
    <lineage>
        <taxon>Eukaryota</taxon>
        <taxon>Fungi</taxon>
        <taxon>Dikarya</taxon>
        <taxon>Ascomycota</taxon>
        <taxon>Saccharomycotina</taxon>
        <taxon>Saccharomycetes</taxon>
        <taxon>Saccharomycetales</taxon>
        <taxon>Saccharomycetaceae</taxon>
        <taxon>Saccharomyces</taxon>
    </lineage>
</organism>
<keyword id="KW-0067">ATP-binding</keyword>
<keyword id="KW-0418">Kinase</keyword>
<keyword id="KW-0547">Nucleotide-binding</keyword>
<keyword id="KW-0539">Nucleus</keyword>
<keyword id="KW-0597">Phosphoprotein</keyword>
<keyword id="KW-1185">Reference proteome</keyword>
<keyword id="KW-0723">Serine/threonine-protein kinase</keyword>
<keyword id="KW-0808">Transferase</keyword>
<feature type="chain" id="PRO_0000086228" description="Serine/threonine-protein kinase KSP1">
    <location>
        <begin position="1"/>
        <end position="1029"/>
    </location>
</feature>
<feature type="domain" description="Protein kinase" evidence="1">
    <location>
        <begin position="18"/>
        <end position="351"/>
    </location>
</feature>
<feature type="region of interest" description="Disordered" evidence="3">
    <location>
        <begin position="56"/>
        <end position="105"/>
    </location>
</feature>
<feature type="region of interest" description="Disordered" evidence="3">
    <location>
        <begin position="377"/>
        <end position="397"/>
    </location>
</feature>
<feature type="region of interest" description="Disordered" evidence="3">
    <location>
        <begin position="532"/>
        <end position="570"/>
    </location>
</feature>
<feature type="region of interest" description="Disordered" evidence="3">
    <location>
        <begin position="732"/>
        <end position="824"/>
    </location>
</feature>
<feature type="region of interest" description="Disordered" evidence="3">
    <location>
        <begin position="949"/>
        <end position="978"/>
    </location>
</feature>
<feature type="compositionally biased region" description="Acidic residues" evidence="3">
    <location>
        <begin position="56"/>
        <end position="79"/>
    </location>
</feature>
<feature type="compositionally biased region" description="Basic and acidic residues" evidence="3">
    <location>
        <begin position="80"/>
        <end position="89"/>
    </location>
</feature>
<feature type="compositionally biased region" description="Low complexity" evidence="3">
    <location>
        <begin position="90"/>
        <end position="99"/>
    </location>
</feature>
<feature type="compositionally biased region" description="Low complexity" evidence="3">
    <location>
        <begin position="538"/>
        <end position="570"/>
    </location>
</feature>
<feature type="compositionally biased region" description="Low complexity" evidence="3">
    <location>
        <begin position="734"/>
        <end position="743"/>
    </location>
</feature>
<feature type="compositionally biased region" description="Polar residues" evidence="3">
    <location>
        <begin position="744"/>
        <end position="754"/>
    </location>
</feature>
<feature type="compositionally biased region" description="Basic and acidic residues" evidence="3">
    <location>
        <begin position="813"/>
        <end position="824"/>
    </location>
</feature>
<feature type="compositionally biased region" description="Basic and acidic residues" evidence="3">
    <location>
        <begin position="953"/>
        <end position="964"/>
    </location>
</feature>
<feature type="active site" description="Proton acceptor" evidence="1 2">
    <location>
        <position position="207"/>
    </location>
</feature>
<feature type="binding site" evidence="1">
    <location>
        <begin position="27"/>
        <end position="35"/>
    </location>
    <ligand>
        <name>ATP</name>
        <dbReference type="ChEBI" id="CHEBI:30616"/>
    </ligand>
</feature>
<feature type="binding site" evidence="1">
    <location>
        <position position="47"/>
    </location>
    <ligand>
        <name>ATP</name>
        <dbReference type="ChEBI" id="CHEBI:30616"/>
    </ligand>
</feature>
<feature type="modified residue" description="Phosphoserine" evidence="6 8">
    <location>
        <position position="416"/>
    </location>
</feature>
<feature type="modified residue" description="Phosphoserine" evidence="8">
    <location>
        <position position="419"/>
    </location>
</feature>
<feature type="modified residue" description="Phosphothreonine" evidence="8">
    <location>
        <position position="501"/>
    </location>
</feature>
<feature type="modified residue" description="Phosphothreonine" evidence="8">
    <location>
        <position position="504"/>
    </location>
</feature>
<feature type="modified residue" description="Phosphothreonine" evidence="6 7">
    <location>
        <position position="526"/>
    </location>
</feature>
<feature type="modified residue" description="Phosphoserine" evidence="7">
    <location>
        <position position="529"/>
    </location>
</feature>
<feature type="modified residue" description="Phosphoserine" evidence="6 8">
    <location>
        <position position="646"/>
    </location>
</feature>
<feature type="modified residue" description="Phosphoserine" evidence="6 7 8">
    <location>
        <position position="845"/>
    </location>
</feature>
<feature type="modified residue" description="Phosphoserine" evidence="8">
    <location>
        <position position="884"/>
    </location>
</feature>
<feature type="modified residue" description="Phosphothreonine" evidence="8">
    <location>
        <position position="1005"/>
    </location>
</feature>
<feature type="modified residue" description="Phosphoserine" evidence="7 8">
    <location>
        <position position="1014"/>
    </location>
</feature>
<name>KSP1_YEAST</name>
<comment type="function">
    <text>May act on PRP20.</text>
</comment>
<comment type="catalytic activity">
    <reaction>
        <text>L-seryl-[protein] + ATP = O-phospho-L-seryl-[protein] + ADP + H(+)</text>
        <dbReference type="Rhea" id="RHEA:17989"/>
        <dbReference type="Rhea" id="RHEA-COMP:9863"/>
        <dbReference type="Rhea" id="RHEA-COMP:11604"/>
        <dbReference type="ChEBI" id="CHEBI:15378"/>
        <dbReference type="ChEBI" id="CHEBI:29999"/>
        <dbReference type="ChEBI" id="CHEBI:30616"/>
        <dbReference type="ChEBI" id="CHEBI:83421"/>
        <dbReference type="ChEBI" id="CHEBI:456216"/>
        <dbReference type="EC" id="2.7.11.1"/>
    </reaction>
</comment>
<comment type="catalytic activity">
    <reaction>
        <text>L-threonyl-[protein] + ATP = O-phospho-L-threonyl-[protein] + ADP + H(+)</text>
        <dbReference type="Rhea" id="RHEA:46608"/>
        <dbReference type="Rhea" id="RHEA-COMP:11060"/>
        <dbReference type="Rhea" id="RHEA-COMP:11605"/>
        <dbReference type="ChEBI" id="CHEBI:15378"/>
        <dbReference type="ChEBI" id="CHEBI:30013"/>
        <dbReference type="ChEBI" id="CHEBI:30616"/>
        <dbReference type="ChEBI" id="CHEBI:61977"/>
        <dbReference type="ChEBI" id="CHEBI:456216"/>
        <dbReference type="EC" id="2.7.11.1"/>
    </reaction>
</comment>
<comment type="interaction">
    <interactant intactId="EBI-9937">
        <id>P38691</id>
    </interactant>
    <interactant intactId="EBI-24864">
        <id>P38873</id>
        <label>KOG1</label>
    </interactant>
    <organismsDiffer>false</organismsDiffer>
    <experiments>4</experiments>
</comment>
<comment type="interaction">
    <interactant intactId="EBI-9937">
        <id>P38691</id>
    </interactant>
    <interactant intactId="EBI-19374">
        <id>P35169</id>
        <label>TOR1</label>
    </interactant>
    <organismsDiffer>false</organismsDiffer>
    <experiments>2</experiments>
</comment>
<comment type="subcellular location">
    <subcellularLocation>
        <location>Nucleus</location>
    </subcellularLocation>
</comment>
<comment type="PTM">
    <text evidence="5">Phosphorylated by PKA in a TORC1-dependent manner. Phosphorylation at PKA consensus sites RRxS/T decreases upon rapamycin treatment.</text>
</comment>
<comment type="miscellaneous">
    <text evidence="4">Present with 1270 molecules/cell in log phase SD medium.</text>
</comment>
<comment type="similarity">
    <text evidence="1">Belongs to the protein kinase superfamily. Ser/Thr protein kinase family. CK2 subfamily.</text>
</comment>
<proteinExistence type="evidence at protein level"/>
<accession>P38691</accession>
<accession>D3DL33</accession>
<reference key="1">
    <citation type="journal article" date="1996" name="Mol. Gen. Genet.">
        <title>Allele-specific suppression of a Saccharomyces cerevisiae prp20 mutation by overexpression of a nuclear serine/threonine protein kinase.</title>
        <authorList>
            <person name="Fleischmann M."/>
            <person name="Stagljar I."/>
            <person name="Aebi M."/>
        </authorList>
    </citation>
    <scope>NUCLEOTIDE SEQUENCE [GENOMIC DNA]</scope>
    <source>
        <strain>M335 /2A</strain>
    </source>
</reference>
<reference key="2">
    <citation type="journal article" date="1994" name="Science">
        <title>Complete nucleotide sequence of Saccharomyces cerevisiae chromosome VIII.</title>
        <authorList>
            <person name="Johnston M."/>
            <person name="Andrews S."/>
            <person name="Brinkman R."/>
            <person name="Cooper J."/>
            <person name="Ding H."/>
            <person name="Dover J."/>
            <person name="Du Z."/>
            <person name="Favello A."/>
            <person name="Fulton L."/>
            <person name="Gattung S."/>
            <person name="Geisel C."/>
            <person name="Kirsten J."/>
            <person name="Kucaba T."/>
            <person name="Hillier L.W."/>
            <person name="Jier M."/>
            <person name="Johnston L."/>
            <person name="Langston Y."/>
            <person name="Latreille P."/>
            <person name="Louis E.J."/>
            <person name="Macri C."/>
            <person name="Mardis E."/>
            <person name="Menezes S."/>
            <person name="Mouser L."/>
            <person name="Nhan M."/>
            <person name="Rifkin L."/>
            <person name="Riles L."/>
            <person name="St Peter H."/>
            <person name="Trevaskis E."/>
            <person name="Vaughan K."/>
            <person name="Vignati D."/>
            <person name="Wilcox L."/>
            <person name="Wohldman P."/>
            <person name="Waterston R."/>
            <person name="Wilson R."/>
            <person name="Vaudin M."/>
        </authorList>
    </citation>
    <scope>NUCLEOTIDE SEQUENCE [LARGE SCALE GENOMIC DNA]</scope>
    <source>
        <strain>ATCC 204508 / S288c</strain>
    </source>
</reference>
<reference key="3">
    <citation type="journal article" date="2014" name="G3 (Bethesda)">
        <title>The reference genome sequence of Saccharomyces cerevisiae: Then and now.</title>
        <authorList>
            <person name="Engel S.R."/>
            <person name="Dietrich F.S."/>
            <person name="Fisk D.G."/>
            <person name="Binkley G."/>
            <person name="Balakrishnan R."/>
            <person name="Costanzo M.C."/>
            <person name="Dwight S.S."/>
            <person name="Hitz B.C."/>
            <person name="Karra K."/>
            <person name="Nash R.S."/>
            <person name="Weng S."/>
            <person name="Wong E.D."/>
            <person name="Lloyd P."/>
            <person name="Skrzypek M.S."/>
            <person name="Miyasato S.R."/>
            <person name="Simison M."/>
            <person name="Cherry J.M."/>
        </authorList>
    </citation>
    <scope>GENOME REANNOTATION</scope>
    <source>
        <strain>ATCC 204508 / S288c</strain>
    </source>
</reference>
<reference key="4">
    <citation type="journal article" date="2003" name="Nature">
        <title>Global analysis of protein expression in yeast.</title>
        <authorList>
            <person name="Ghaemmaghami S."/>
            <person name="Huh W.-K."/>
            <person name="Bower K."/>
            <person name="Howson R.W."/>
            <person name="Belle A."/>
            <person name="Dephoure N."/>
            <person name="O'Shea E.K."/>
            <person name="Weissman J.S."/>
        </authorList>
    </citation>
    <scope>LEVEL OF PROTEIN EXPRESSION [LARGE SCALE ANALYSIS]</scope>
</reference>
<reference key="5">
    <citation type="journal article" date="2007" name="J. Proteome Res.">
        <title>Large-scale phosphorylation analysis of alpha-factor-arrested Saccharomyces cerevisiae.</title>
        <authorList>
            <person name="Li X."/>
            <person name="Gerber S.A."/>
            <person name="Rudner A.D."/>
            <person name="Beausoleil S.A."/>
            <person name="Haas W."/>
            <person name="Villen J."/>
            <person name="Elias J.E."/>
            <person name="Gygi S.P."/>
        </authorList>
    </citation>
    <scope>PHOSPHORYLATION [LARGE SCALE ANALYSIS] AT SER-416; THR-526; SER-646 AND SER-845</scope>
    <scope>IDENTIFICATION BY MASS SPECTROMETRY [LARGE SCALE ANALYSIS]</scope>
    <source>
        <strain>ADR376</strain>
    </source>
</reference>
<reference key="6">
    <citation type="journal article" date="2007" name="Proc. Natl. Acad. Sci. U.S.A.">
        <title>Analysis of phosphorylation sites on proteins from Saccharomyces cerevisiae by electron transfer dissociation (ETD) mass spectrometry.</title>
        <authorList>
            <person name="Chi A."/>
            <person name="Huttenhower C."/>
            <person name="Geer L.Y."/>
            <person name="Coon J.J."/>
            <person name="Syka J.E.P."/>
            <person name="Bai D.L."/>
            <person name="Shabanowitz J."/>
            <person name="Burke D.J."/>
            <person name="Troyanskaya O.G."/>
            <person name="Hunt D.F."/>
        </authorList>
    </citation>
    <scope>IDENTIFICATION BY MASS SPECTROMETRY [LARGE SCALE ANALYSIS]</scope>
</reference>
<reference key="7">
    <citation type="journal article" date="2008" name="Mol. Cell. Proteomics">
        <title>A multidimensional chromatography technology for in-depth phosphoproteome analysis.</title>
        <authorList>
            <person name="Albuquerque C.P."/>
            <person name="Smolka M.B."/>
            <person name="Payne S.H."/>
            <person name="Bafna V."/>
            <person name="Eng J."/>
            <person name="Zhou H."/>
        </authorList>
    </citation>
    <scope>PHOSPHORYLATION [LARGE SCALE ANALYSIS] AT THR-526; SER-529; SER-845 AND SER-1014</scope>
    <scope>IDENTIFICATION BY MASS SPECTROMETRY [LARGE SCALE ANALYSIS]</scope>
</reference>
<reference key="8">
    <citation type="journal article" date="2009" name="Science">
        <title>Global analysis of Cdk1 substrate phosphorylation sites provides insights into evolution.</title>
        <authorList>
            <person name="Holt L.J."/>
            <person name="Tuch B.B."/>
            <person name="Villen J."/>
            <person name="Johnson A.D."/>
            <person name="Gygi S.P."/>
            <person name="Morgan D.O."/>
        </authorList>
    </citation>
    <scope>PHOSPHORYLATION [LARGE SCALE ANALYSIS] AT SER-416; SER-419; THR-501; THR-504; SER-646; SER-845; SER-884; THR-1005 AND SER-1014</scope>
    <scope>IDENTIFICATION BY MASS SPECTROMETRY [LARGE SCALE ANALYSIS]</scope>
</reference>
<reference key="9">
    <citation type="journal article" date="2010" name="Mol. Biol. Cell">
        <title>The rapamycin-sensitive phosphoproteome reveals that TOR controls protein kinase A toward some but not all substrates.</title>
        <authorList>
            <person name="Soulard A."/>
            <person name="Cremonesi A."/>
            <person name="Moes S."/>
            <person name="Schutz F."/>
            <person name="Jeno P."/>
            <person name="Hall M.N."/>
        </authorList>
    </citation>
    <scope>PHOSPHORYLATION BY PKA</scope>
</reference>
<evidence type="ECO:0000255" key="1">
    <source>
        <dbReference type="PROSITE-ProRule" id="PRU00159"/>
    </source>
</evidence>
<evidence type="ECO:0000255" key="2">
    <source>
        <dbReference type="PROSITE-ProRule" id="PRU10027"/>
    </source>
</evidence>
<evidence type="ECO:0000256" key="3">
    <source>
        <dbReference type="SAM" id="MobiDB-lite"/>
    </source>
</evidence>
<evidence type="ECO:0000269" key="4">
    <source>
    </source>
</evidence>
<evidence type="ECO:0000269" key="5">
    <source>
    </source>
</evidence>
<evidence type="ECO:0007744" key="6">
    <source>
    </source>
</evidence>
<evidence type="ECO:0007744" key="7">
    <source>
    </source>
</evidence>
<evidence type="ECO:0007744" key="8">
    <source>
    </source>
</evidence>
<sequence length="1029" mass="117082">MTLDYEIYKEGGILNNRYQKIEDISEGSYGYVSLAKDVREKRLVAVKYIFKLEDDGQYDGPQDDENDCDSSDCDDDEDTKVDTDRHENENGNASSNNGSSREKKHNLYKHKKSLISSKVKSRLSNNICLEAMYEVDIQTKIGRHQNIAALLDFFDSYIIMEYCSGGDLYEAIKADAVPKKTKSITHIITQIMDAIEYVHNKGIYHRDIKPENILISGIDWTIKLTDWGLATTDKTSMDRNVGSERYMSPELFDSNLDIKERKEPYDCAKVDLWAMGIVFLNIVFHKNPFSIANQSDKSFCYFAANREALFDVFSTMAYDFFQVLRYSLTIDPANRDLKMMRTELQNLSEYTLDDEYYNNLDEGYEETMIDGLPPQPVPPSSAPVSLPTPISSSNKQHMPEFKKDFNFNNVNERKRSDVSQNQNVASGFFKKPSTQQQKFFNQGYNTTLSTHERAKSAPKFKFKKRNKYGRTDNQFSKPVNIEDRKKSKILKKSRKPLGIPTPNTHMNNFFHDYKARDEFNTRDFFTPPSVQHRYMEGFSNNNNKQYRQNRNYNNNNNNSNNNHGSNYNNFNNGNSYIKGWNKNFNKYRRPSSSSYTGKSPLSRYNMSYNHNNNSSINGYARRGSTTTVQHSPGAYIPPNARNHHVSPTNQFLRVPQSTAPDISTVLGGKPSYQEHYTQDSMDSEGDHDSDDVLFTLEEGDHDFVNGMDNLSINDHLPHTTVGSHNEVFVHASTNHNNNGNNNHIDTNSTTNQYHRQYIPPPLTTSLHINNNNNESNELPDLLKSPASSEAHLNLSSGPIDPILTGNIGNRYSHSSDSKELEQERRLSMEQKFKNGVYVPPHHRKSFNLGTQVPPMNMKTSNEATLSVSHNSVNFGGSYNSRRSSANESNPLHMNKALEKLSSSPGAKSSFVGFPKPLLPRNHSSTTIALQNEDVFADSNNDAIIFEDEEYEGESDKMAHGKMEGGDNESSSTSPDERQIFGPYEIYAQTFAGSTHDKKLGAGRKTSIQDEMVGSLEQYKNNWLILQQQD</sequence>
<gene>
    <name type="primary">KSP1</name>
    <name type="ordered locus">YHR082C</name>
</gene>